<reference key="1">
    <citation type="journal article" date="1996" name="Dev. Dyn.">
        <title>Zebrafish cyclin E regulation during early embryogenesis.</title>
        <authorList>
            <person name="Yarden A."/>
            <person name="Geiger B."/>
        </authorList>
    </citation>
    <scope>NUCLEOTIDE SEQUENCE [MRNA]</scope>
</reference>
<reference key="2">
    <citation type="submission" date="2004-07" db="EMBL/GenBank/DDBJ databases">
        <authorList>
            <consortium name="NIH - Zebrafish Gene Collection (ZGC) project"/>
        </authorList>
    </citation>
    <scope>NUCLEOTIDE SEQUENCE [LARGE SCALE MRNA]</scope>
    <source>
        <strain>AB</strain>
        <tissue>Embryo</tissue>
    </source>
</reference>
<evidence type="ECO:0000250" key="1">
    <source>
        <dbReference type="UniProtKB" id="P24864"/>
    </source>
</evidence>
<evidence type="ECO:0000256" key="2">
    <source>
        <dbReference type="SAM" id="MobiDB-lite"/>
    </source>
</evidence>
<evidence type="ECO:0000305" key="3"/>
<name>CCNE1_DANRE</name>
<accession>P47794</accession>
<protein>
    <recommendedName>
        <fullName>G1/S-specific cyclin-E1</fullName>
    </recommendedName>
</protein>
<dbReference type="EMBL" id="X83594">
    <property type="protein sequence ID" value="CAA58574.1"/>
    <property type="molecule type" value="mRNA"/>
</dbReference>
<dbReference type="EMBL" id="BC045842">
    <property type="protein sequence ID" value="AAH45842.1"/>
    <property type="molecule type" value="mRNA"/>
</dbReference>
<dbReference type="EMBL" id="BC075747">
    <property type="protein sequence ID" value="AAH75747.1"/>
    <property type="molecule type" value="mRNA"/>
</dbReference>
<dbReference type="PIR" id="S52288">
    <property type="entry name" value="S52288"/>
</dbReference>
<dbReference type="RefSeq" id="NP_571070.1">
    <property type="nucleotide sequence ID" value="NM_130995.1"/>
</dbReference>
<dbReference type="SMR" id="P47794"/>
<dbReference type="FunCoup" id="P47794">
    <property type="interactions" value="759"/>
</dbReference>
<dbReference type="STRING" id="7955.ENSDARP00000141259"/>
<dbReference type="PaxDb" id="7955-ENSDARP00000024696"/>
<dbReference type="GeneID" id="30188"/>
<dbReference type="KEGG" id="dre:30188"/>
<dbReference type="AGR" id="ZFIN:ZDB-GENE-980526-168"/>
<dbReference type="CTD" id="898"/>
<dbReference type="ZFIN" id="ZDB-GENE-980526-168">
    <property type="gene designation" value="ccne1"/>
</dbReference>
<dbReference type="eggNOG" id="KOG0655">
    <property type="taxonomic scope" value="Eukaryota"/>
</dbReference>
<dbReference type="InParanoid" id="P47794"/>
<dbReference type="OrthoDB" id="5590282at2759"/>
<dbReference type="PhylomeDB" id="P47794"/>
<dbReference type="Reactome" id="R-DRE-1538133">
    <property type="pathway name" value="G0 and Early G1"/>
</dbReference>
<dbReference type="Reactome" id="R-DRE-187577">
    <property type="pathway name" value="SCF(Skp2)-mediated degradation of p27/p21"/>
</dbReference>
<dbReference type="Reactome" id="R-DRE-2559586">
    <property type="pathway name" value="DNA Damage/Telomere Stress Induced Senescence"/>
</dbReference>
<dbReference type="Reactome" id="R-DRE-6804116">
    <property type="pathway name" value="TP53 Regulates Transcription of Genes Involved in G1 Cell Cycle Arrest"/>
</dbReference>
<dbReference type="Reactome" id="R-DRE-69017">
    <property type="pathway name" value="CDK-mediated phosphorylation and removal of Cdc6"/>
</dbReference>
<dbReference type="Reactome" id="R-DRE-69200">
    <property type="pathway name" value="Phosphorylation of proteins involved in G1/S transition by active Cyclin E:Cdk2 complexes"/>
</dbReference>
<dbReference type="Reactome" id="R-DRE-69202">
    <property type="pathway name" value="Cyclin E associated events during G1/S transition"/>
</dbReference>
<dbReference type="Reactome" id="R-DRE-69563">
    <property type="pathway name" value="p53-Dependent G1 DNA Damage Response"/>
</dbReference>
<dbReference type="Reactome" id="R-DRE-8849470">
    <property type="pathway name" value="PTK6 Regulates Cell Cycle"/>
</dbReference>
<dbReference type="PRO" id="PR:P47794"/>
<dbReference type="Proteomes" id="UP000000437">
    <property type="component" value="Alternate scaffold 7"/>
</dbReference>
<dbReference type="Proteomes" id="UP000000437">
    <property type="component" value="Chromosome 7"/>
</dbReference>
<dbReference type="GO" id="GO:0097134">
    <property type="term" value="C:cyclin E1-CDK2 complex"/>
    <property type="evidence" value="ECO:0000318"/>
    <property type="project" value="GO_Central"/>
</dbReference>
<dbReference type="GO" id="GO:0005737">
    <property type="term" value="C:cytoplasm"/>
    <property type="evidence" value="ECO:0000318"/>
    <property type="project" value="GO_Central"/>
</dbReference>
<dbReference type="GO" id="GO:0005815">
    <property type="term" value="C:microtubule organizing center"/>
    <property type="evidence" value="ECO:0000318"/>
    <property type="project" value="GO_Central"/>
</dbReference>
<dbReference type="GO" id="GO:0005634">
    <property type="term" value="C:nucleus"/>
    <property type="evidence" value="ECO:0000318"/>
    <property type="project" value="GO_Central"/>
</dbReference>
<dbReference type="GO" id="GO:0016538">
    <property type="term" value="F:cyclin-dependent protein serine/threonine kinase regulator activity"/>
    <property type="evidence" value="ECO:0000318"/>
    <property type="project" value="GO_Central"/>
</dbReference>
<dbReference type="GO" id="GO:0016301">
    <property type="term" value="F:kinase activity"/>
    <property type="evidence" value="ECO:0000314"/>
    <property type="project" value="ZFIN"/>
</dbReference>
<dbReference type="GO" id="GO:0051301">
    <property type="term" value="P:cell division"/>
    <property type="evidence" value="ECO:0007669"/>
    <property type="project" value="UniProtKB-KW"/>
</dbReference>
<dbReference type="GO" id="GO:0000082">
    <property type="term" value="P:G1/S transition of mitotic cell cycle"/>
    <property type="evidence" value="ECO:0000318"/>
    <property type="project" value="GO_Central"/>
</dbReference>
<dbReference type="GO" id="GO:1900087">
    <property type="term" value="P:positive regulation of G1/S transition of mitotic cell cycle"/>
    <property type="evidence" value="ECO:0000318"/>
    <property type="project" value="GO_Central"/>
</dbReference>
<dbReference type="CDD" id="cd20579">
    <property type="entry name" value="CYCLIN_CCNE1_rpt1"/>
    <property type="match status" value="1"/>
</dbReference>
<dbReference type="FunFam" id="1.10.472.10:FF:000024">
    <property type="entry name" value="G1/S-specific cyclin-E1"/>
    <property type="match status" value="1"/>
</dbReference>
<dbReference type="Gene3D" id="1.10.472.10">
    <property type="entry name" value="Cyclin-like"/>
    <property type="match status" value="2"/>
</dbReference>
<dbReference type="InterPro" id="IPR039361">
    <property type="entry name" value="Cyclin"/>
</dbReference>
<dbReference type="InterPro" id="IPR013763">
    <property type="entry name" value="Cyclin-like_dom"/>
</dbReference>
<dbReference type="InterPro" id="IPR036915">
    <property type="entry name" value="Cyclin-like_sf"/>
</dbReference>
<dbReference type="InterPro" id="IPR004367">
    <property type="entry name" value="Cyclin_C-dom"/>
</dbReference>
<dbReference type="InterPro" id="IPR006671">
    <property type="entry name" value="Cyclin_N"/>
</dbReference>
<dbReference type="InterPro" id="IPR048258">
    <property type="entry name" value="Cyclins_cyclin-box"/>
</dbReference>
<dbReference type="PANTHER" id="PTHR10177">
    <property type="entry name" value="CYCLINS"/>
    <property type="match status" value="1"/>
</dbReference>
<dbReference type="Pfam" id="PF02984">
    <property type="entry name" value="Cyclin_C"/>
    <property type="match status" value="1"/>
</dbReference>
<dbReference type="Pfam" id="PF00134">
    <property type="entry name" value="Cyclin_N"/>
    <property type="match status" value="1"/>
</dbReference>
<dbReference type="SMART" id="SM00385">
    <property type="entry name" value="CYCLIN"/>
    <property type="match status" value="1"/>
</dbReference>
<dbReference type="SMART" id="SM01332">
    <property type="entry name" value="Cyclin_C"/>
    <property type="match status" value="1"/>
</dbReference>
<dbReference type="SUPFAM" id="SSF47954">
    <property type="entry name" value="Cyclin-like"/>
    <property type="match status" value="2"/>
</dbReference>
<dbReference type="PROSITE" id="PS00292">
    <property type="entry name" value="CYCLINS"/>
    <property type="match status" value="1"/>
</dbReference>
<organism>
    <name type="scientific">Danio rerio</name>
    <name type="common">Zebrafish</name>
    <name type="synonym">Brachydanio rerio</name>
    <dbReference type="NCBI Taxonomy" id="7955"/>
    <lineage>
        <taxon>Eukaryota</taxon>
        <taxon>Metazoa</taxon>
        <taxon>Chordata</taxon>
        <taxon>Craniata</taxon>
        <taxon>Vertebrata</taxon>
        <taxon>Euteleostomi</taxon>
        <taxon>Actinopterygii</taxon>
        <taxon>Neopterygii</taxon>
        <taxon>Teleostei</taxon>
        <taxon>Ostariophysi</taxon>
        <taxon>Cypriniformes</taxon>
        <taxon>Danionidae</taxon>
        <taxon>Danioninae</taxon>
        <taxon>Danio</taxon>
    </lineage>
</organism>
<gene>
    <name type="primary">ccne1</name>
    <name type="synonym">ccne</name>
    <name type="synonym">cyce</name>
</gene>
<proteinExistence type="evidence at transcript level"/>
<keyword id="KW-0131">Cell cycle</keyword>
<keyword id="KW-0132">Cell division</keyword>
<keyword id="KW-0195">Cyclin</keyword>
<keyword id="KW-0539">Nucleus</keyword>
<keyword id="KW-0597">Phosphoprotein</keyword>
<keyword id="KW-1185">Reference proteome</keyword>
<comment type="function">
    <text>Essential for the control of the cell cycle at the G1/S (start) transition.</text>
</comment>
<comment type="subunit">
    <text evidence="1">Interacts with CDK2 protein kinase to form a serine/threonine kinase holoenzyme complex. The cyclin subunit imparts substrate specificity to the complex.</text>
</comment>
<comment type="subcellular location">
    <subcellularLocation>
        <location evidence="1">Nucleus</location>
    </subcellularLocation>
</comment>
<comment type="PTM">
    <text evidence="1">Phosphorylation by CDK2 triggers its release from CDK2 and degradation via the ubiquitin proteasome pathway.</text>
</comment>
<comment type="similarity">
    <text evidence="3">Belongs to the cyclin family. Cyclin E subfamily.</text>
</comment>
<sequence length="410" mass="46631">MPSKKVLQTEHINTTDEAPKTTSVRPRKRKADVAIHLQDPDEEVTEMTRKKQCASQACWNPDTGYTSPCRRIPTPDEVEEPVAFGSVGFTQYASESIFITPTRSTPLPALCWASKDEVWNNLLGKDKLYLRDTRVMERHPNLQPKMRAILLDWLMEVCEVYKLHRETFYLGQDYFDRFMATQENVLKTTLQLIGISCLFIAAKMEEIYPPKVHQFAYVTDGACTEDDILSMEIIIMKELNWSLSPLTPVAWLNIYMQMAYLKETAEVLTAQYPQATFVQIAELLDLCILDVRSLEFSYSLLAASALFHFSSLELVIKVSGLKWCDLEECVRWMVPFAMSIREAGSSALKTFKGIAADDMHNIQTHVPYLEWLGKVHSYQLVDIESSQRSPVPTGVLTPPPSSEKPESTIS</sequence>
<feature type="chain" id="PRO_0000080453" description="G1/S-specific cyclin-E1">
    <location>
        <begin position="1"/>
        <end position="410"/>
    </location>
</feature>
<feature type="region of interest" description="Disordered" evidence="2">
    <location>
        <begin position="1"/>
        <end position="31"/>
    </location>
</feature>
<feature type="region of interest" description="Disordered" evidence="2">
    <location>
        <begin position="387"/>
        <end position="410"/>
    </location>
</feature>
<feature type="modified residue" description="Phosphothreonine" evidence="1">
    <location>
        <position position="397"/>
    </location>
</feature>